<sequence length="328" mass="37275">MSLIKIDQKAYEYNLRHIAKKIGSFQRLICVFKDNAYGHGAKLLAPLAKNLGVSFVAVKSEEEAQEIEEFFENILILSHRPHGNENSRFIYALNDISQVKKYKQDIKIHLKIDTGMHRNGICVENLEHAIDLIRSSDLKLTGMFTHFASADEMDGSFFVQKENFQKAKKIVKKYFSNLLFHSHNSAALFRGKIPEDEYCRVGLVQFGYGDSNLKRVLSLYAHRLSQRILQKGQSIGYGGIFTAAKDMEVATYDLGYADGLFRYNGKGELVLGNGKVMLGKMSMDSFSCENSGEEICVFKDADIWADFFHTINYEILVKLNPNIQRVLV</sequence>
<accession>A8FLV4</accession>
<reference key="1">
    <citation type="journal article" date="2007" name="J. Bacteriol.">
        <title>The complete genome sequence of Campylobacter jejuni strain 81116 (NCTC11828).</title>
        <authorList>
            <person name="Pearson B.M."/>
            <person name="Gaskin D.J.H."/>
            <person name="Segers R.P.A.M."/>
            <person name="Wells J.M."/>
            <person name="Nuijten P.J.M."/>
            <person name="van Vliet A.H.M."/>
        </authorList>
    </citation>
    <scope>NUCLEOTIDE SEQUENCE [LARGE SCALE GENOMIC DNA]</scope>
    <source>
        <strain>81116 / NCTC 11828</strain>
    </source>
</reference>
<proteinExistence type="inferred from homology"/>
<name>ALR_CAMJ8</name>
<evidence type="ECO:0000255" key="1">
    <source>
        <dbReference type="HAMAP-Rule" id="MF_01201"/>
    </source>
</evidence>
<dbReference type="EC" id="5.1.1.1" evidence="1"/>
<dbReference type="EMBL" id="CP000814">
    <property type="protein sequence ID" value="ABV52441.1"/>
    <property type="molecule type" value="Genomic_DNA"/>
</dbReference>
<dbReference type="RefSeq" id="WP_002865911.1">
    <property type="nucleotide sequence ID" value="NC_009839.1"/>
</dbReference>
<dbReference type="SMR" id="A8FLV4"/>
<dbReference type="KEGG" id="cju:C8J_0842"/>
<dbReference type="HOGENOM" id="CLU_028393_2_2_7"/>
<dbReference type="UniPathway" id="UPA00042">
    <property type="reaction ID" value="UER00497"/>
</dbReference>
<dbReference type="GO" id="GO:0005829">
    <property type="term" value="C:cytosol"/>
    <property type="evidence" value="ECO:0007669"/>
    <property type="project" value="TreeGrafter"/>
</dbReference>
<dbReference type="GO" id="GO:0008784">
    <property type="term" value="F:alanine racemase activity"/>
    <property type="evidence" value="ECO:0007669"/>
    <property type="project" value="UniProtKB-UniRule"/>
</dbReference>
<dbReference type="GO" id="GO:0030170">
    <property type="term" value="F:pyridoxal phosphate binding"/>
    <property type="evidence" value="ECO:0007669"/>
    <property type="project" value="UniProtKB-UniRule"/>
</dbReference>
<dbReference type="GO" id="GO:0030632">
    <property type="term" value="P:D-alanine biosynthetic process"/>
    <property type="evidence" value="ECO:0007669"/>
    <property type="project" value="UniProtKB-UniRule"/>
</dbReference>
<dbReference type="GO" id="GO:0009252">
    <property type="term" value="P:peptidoglycan biosynthetic process"/>
    <property type="evidence" value="ECO:0007669"/>
    <property type="project" value="TreeGrafter"/>
</dbReference>
<dbReference type="Gene3D" id="3.20.20.10">
    <property type="entry name" value="Alanine racemase"/>
    <property type="match status" value="1"/>
</dbReference>
<dbReference type="Gene3D" id="2.40.37.10">
    <property type="entry name" value="Lyase, Ornithine Decarboxylase, Chain A, domain 1"/>
    <property type="match status" value="1"/>
</dbReference>
<dbReference type="HAMAP" id="MF_01201">
    <property type="entry name" value="Ala_racemase"/>
    <property type="match status" value="1"/>
</dbReference>
<dbReference type="InterPro" id="IPR000821">
    <property type="entry name" value="Ala_racemase"/>
</dbReference>
<dbReference type="InterPro" id="IPR009006">
    <property type="entry name" value="Ala_racemase/Decarboxylase_C"/>
</dbReference>
<dbReference type="InterPro" id="IPR011079">
    <property type="entry name" value="Ala_racemase_C"/>
</dbReference>
<dbReference type="InterPro" id="IPR001608">
    <property type="entry name" value="Ala_racemase_N"/>
</dbReference>
<dbReference type="InterPro" id="IPR020622">
    <property type="entry name" value="Ala_racemase_pyridoxalP-BS"/>
</dbReference>
<dbReference type="InterPro" id="IPR029066">
    <property type="entry name" value="PLP-binding_barrel"/>
</dbReference>
<dbReference type="NCBIfam" id="TIGR00492">
    <property type="entry name" value="alr"/>
    <property type="match status" value="1"/>
</dbReference>
<dbReference type="NCBIfam" id="NF000791">
    <property type="entry name" value="PRK00053.2-2"/>
    <property type="match status" value="1"/>
</dbReference>
<dbReference type="PANTHER" id="PTHR30511">
    <property type="entry name" value="ALANINE RACEMASE"/>
    <property type="match status" value="1"/>
</dbReference>
<dbReference type="PANTHER" id="PTHR30511:SF0">
    <property type="entry name" value="ALANINE RACEMASE, CATABOLIC-RELATED"/>
    <property type="match status" value="1"/>
</dbReference>
<dbReference type="Pfam" id="PF00842">
    <property type="entry name" value="Ala_racemase_C"/>
    <property type="match status" value="1"/>
</dbReference>
<dbReference type="Pfam" id="PF01168">
    <property type="entry name" value="Ala_racemase_N"/>
    <property type="match status" value="1"/>
</dbReference>
<dbReference type="PRINTS" id="PR00992">
    <property type="entry name" value="ALARACEMASE"/>
</dbReference>
<dbReference type="SMART" id="SM01005">
    <property type="entry name" value="Ala_racemase_C"/>
    <property type="match status" value="1"/>
</dbReference>
<dbReference type="SUPFAM" id="SSF50621">
    <property type="entry name" value="Alanine racemase C-terminal domain-like"/>
    <property type="match status" value="1"/>
</dbReference>
<dbReference type="SUPFAM" id="SSF51419">
    <property type="entry name" value="PLP-binding barrel"/>
    <property type="match status" value="1"/>
</dbReference>
<dbReference type="PROSITE" id="PS00395">
    <property type="entry name" value="ALANINE_RACEMASE"/>
    <property type="match status" value="1"/>
</dbReference>
<organism>
    <name type="scientific">Campylobacter jejuni subsp. jejuni serotype O:6 (strain 81116 / NCTC 11828)</name>
    <dbReference type="NCBI Taxonomy" id="407148"/>
    <lineage>
        <taxon>Bacteria</taxon>
        <taxon>Pseudomonadati</taxon>
        <taxon>Campylobacterota</taxon>
        <taxon>Epsilonproteobacteria</taxon>
        <taxon>Campylobacterales</taxon>
        <taxon>Campylobacteraceae</taxon>
        <taxon>Campylobacter</taxon>
    </lineage>
</organism>
<protein>
    <recommendedName>
        <fullName evidence="1">Alanine racemase</fullName>
        <ecNumber evidence="1">5.1.1.1</ecNumber>
    </recommendedName>
</protein>
<feature type="chain" id="PRO_1000138586" description="Alanine racemase">
    <location>
        <begin position="1"/>
        <end position="328"/>
    </location>
</feature>
<feature type="active site" description="Proton acceptor; specific for D-alanine" evidence="1">
    <location>
        <position position="33"/>
    </location>
</feature>
<feature type="active site" description="Proton acceptor; specific for L-alanine" evidence="1">
    <location>
        <position position="237"/>
    </location>
</feature>
<feature type="binding site" evidence="1">
    <location>
        <position position="118"/>
    </location>
    <ligand>
        <name>substrate</name>
    </ligand>
</feature>
<feature type="binding site" evidence="1">
    <location>
        <position position="283"/>
    </location>
    <ligand>
        <name>substrate</name>
    </ligand>
</feature>
<feature type="modified residue" description="N6-(pyridoxal phosphate)lysine" evidence="1">
    <location>
        <position position="33"/>
    </location>
</feature>
<comment type="function">
    <text evidence="1">Catalyzes the interconversion of L-alanine and D-alanine. May also act on other amino acids.</text>
</comment>
<comment type="catalytic activity">
    <reaction evidence="1">
        <text>L-alanine = D-alanine</text>
        <dbReference type="Rhea" id="RHEA:20249"/>
        <dbReference type="ChEBI" id="CHEBI:57416"/>
        <dbReference type="ChEBI" id="CHEBI:57972"/>
        <dbReference type="EC" id="5.1.1.1"/>
    </reaction>
</comment>
<comment type="cofactor">
    <cofactor evidence="1">
        <name>pyridoxal 5'-phosphate</name>
        <dbReference type="ChEBI" id="CHEBI:597326"/>
    </cofactor>
</comment>
<comment type="pathway">
    <text evidence="1">Amino-acid biosynthesis; D-alanine biosynthesis; D-alanine from L-alanine: step 1/1.</text>
</comment>
<comment type="similarity">
    <text evidence="1">Belongs to the alanine racemase family.</text>
</comment>
<gene>
    <name type="primary">alr</name>
    <name type="ordered locus">C8J_0842</name>
</gene>
<keyword id="KW-0413">Isomerase</keyword>
<keyword id="KW-0663">Pyridoxal phosphate</keyword>